<keyword id="KW-0963">Cytoplasm</keyword>
<keyword id="KW-0251">Elongation factor</keyword>
<keyword id="KW-0342">GTP-binding</keyword>
<keyword id="KW-0378">Hydrolase</keyword>
<keyword id="KW-0460">Magnesium</keyword>
<keyword id="KW-0479">Metal-binding</keyword>
<keyword id="KW-0547">Nucleotide-binding</keyword>
<keyword id="KW-0648">Protein biosynthesis</keyword>
<keyword id="KW-1185">Reference proteome</keyword>
<protein>
    <recommendedName>
        <fullName evidence="2">Elongation factor Tu</fullName>
        <shortName evidence="2">EF-Tu</shortName>
        <ecNumber evidence="2">3.6.5.3</ecNumber>
    </recommendedName>
</protein>
<feature type="chain" id="PRO_1000095080" description="Elongation factor Tu">
    <location>
        <begin position="1"/>
        <end position="396"/>
    </location>
</feature>
<feature type="domain" description="tr-type G">
    <location>
        <begin position="10"/>
        <end position="206"/>
    </location>
</feature>
<feature type="region of interest" description="G1" evidence="1">
    <location>
        <begin position="19"/>
        <end position="26"/>
    </location>
</feature>
<feature type="region of interest" description="G2" evidence="1">
    <location>
        <begin position="60"/>
        <end position="64"/>
    </location>
</feature>
<feature type="region of interest" description="G3" evidence="1">
    <location>
        <begin position="81"/>
        <end position="84"/>
    </location>
</feature>
<feature type="region of interest" description="G4" evidence="1">
    <location>
        <begin position="136"/>
        <end position="139"/>
    </location>
</feature>
<feature type="region of interest" description="G5" evidence="1">
    <location>
        <begin position="176"/>
        <end position="178"/>
    </location>
</feature>
<feature type="binding site" evidence="2">
    <location>
        <begin position="19"/>
        <end position="26"/>
    </location>
    <ligand>
        <name>GTP</name>
        <dbReference type="ChEBI" id="CHEBI:37565"/>
    </ligand>
</feature>
<feature type="binding site" evidence="2">
    <location>
        <position position="26"/>
    </location>
    <ligand>
        <name>Mg(2+)</name>
        <dbReference type="ChEBI" id="CHEBI:18420"/>
    </ligand>
</feature>
<feature type="binding site" evidence="2">
    <location>
        <begin position="81"/>
        <end position="85"/>
    </location>
    <ligand>
        <name>GTP</name>
        <dbReference type="ChEBI" id="CHEBI:37565"/>
    </ligand>
</feature>
<feature type="binding site" evidence="2">
    <location>
        <begin position="136"/>
        <end position="139"/>
    </location>
    <ligand>
        <name>GTP</name>
        <dbReference type="ChEBI" id="CHEBI:37565"/>
    </ligand>
</feature>
<sequence length="396" mass="43551">MAKLDFDRSKEHVNIGTIGHVDHGKTTLTAAIATVLAKKGLSEAKSYDAIDNAPEEKARGITINTSHIEYNTEKRHYAHVDCPGHADYIKNMITGAAQMDGSILVVAATDGAMPQTKEHVLLAKQVGVPKMVVFLNKCDMIKPEDAEMIDLVEMEVRELLTKYGFDGDNTPFVRGSALQALQGKPEYEENILELMNAVDTWIETPVKDFEKPFLMAVEDVFTISGRGTVATGRVERGRLSLNEEVEIVGLKPTKKTVVTGIEMFRKNLKEAQAGDNAGLLLRGVERSAIERGQVLAKPGSIVPHAEFEAAIYALTKEEGGRHTPFFVNYKPQFYFRTTDVTGGLEFEKGREFVQPGENVNLKVKLIAPIAVEEGTKFSIREGGRTVGYGSVTKILK</sequence>
<comment type="function">
    <text evidence="2">GTP hydrolase that promotes the GTP-dependent binding of aminoacyl-tRNA to the A-site of ribosomes during protein biosynthesis.</text>
</comment>
<comment type="catalytic activity">
    <reaction evidence="2">
        <text>GTP + H2O = GDP + phosphate + H(+)</text>
        <dbReference type="Rhea" id="RHEA:19669"/>
        <dbReference type="ChEBI" id="CHEBI:15377"/>
        <dbReference type="ChEBI" id="CHEBI:15378"/>
        <dbReference type="ChEBI" id="CHEBI:37565"/>
        <dbReference type="ChEBI" id="CHEBI:43474"/>
        <dbReference type="ChEBI" id="CHEBI:58189"/>
        <dbReference type="EC" id="3.6.5.3"/>
    </reaction>
    <physiologicalReaction direction="left-to-right" evidence="2">
        <dbReference type="Rhea" id="RHEA:19670"/>
    </physiologicalReaction>
</comment>
<comment type="subunit">
    <text evidence="2">Monomer.</text>
</comment>
<comment type="subcellular location">
    <subcellularLocation>
        <location evidence="2">Cytoplasm</location>
    </subcellularLocation>
</comment>
<comment type="similarity">
    <text evidence="2">Belongs to the TRAFAC class translation factor GTPase superfamily. Classic translation factor GTPase family. EF-Tu/EF-1A subfamily.</text>
</comment>
<proteinExistence type="inferred from homology"/>
<name>EFTU_MYCAP</name>
<accession>A5IYA9</accession>
<evidence type="ECO:0000250" key="1"/>
<evidence type="ECO:0000255" key="2">
    <source>
        <dbReference type="HAMAP-Rule" id="MF_00118"/>
    </source>
</evidence>
<reference key="1">
    <citation type="journal article" date="2007" name="PLoS Genet.">
        <title>Being pathogenic, plastic, and sexual while living with a nearly minimal bacterial genome.</title>
        <authorList>
            <person name="Sirand-Pugnet P."/>
            <person name="Lartigue C."/>
            <person name="Marenda M."/>
            <person name="Jacob D."/>
            <person name="Barre A."/>
            <person name="Barbe V."/>
            <person name="Schenowitz C."/>
            <person name="Mangenot S."/>
            <person name="Couloux A."/>
            <person name="Segurens B."/>
            <person name="de Daruvar A."/>
            <person name="Blanchard A."/>
            <person name="Citti C."/>
        </authorList>
    </citation>
    <scope>NUCLEOTIDE SEQUENCE [LARGE SCALE GENOMIC DNA]</scope>
    <source>
        <strain>NCTC 10123 / CIP 59.7 / PG2</strain>
    </source>
</reference>
<organism>
    <name type="scientific">Mycoplasmopsis agalactiae (strain NCTC 10123 / CIP 59.7 / PG2)</name>
    <name type="common">Mycoplasma agalactiae</name>
    <dbReference type="NCBI Taxonomy" id="347257"/>
    <lineage>
        <taxon>Bacteria</taxon>
        <taxon>Bacillati</taxon>
        <taxon>Mycoplasmatota</taxon>
        <taxon>Mycoplasmoidales</taxon>
        <taxon>Metamycoplasmataceae</taxon>
        <taxon>Mycoplasmopsis</taxon>
    </lineage>
</organism>
<gene>
    <name evidence="2" type="primary">tuf</name>
    <name type="ordered locus">MAG3200</name>
</gene>
<dbReference type="EC" id="3.6.5.3" evidence="2"/>
<dbReference type="EMBL" id="CU179680">
    <property type="protein sequence ID" value="CAL59018.1"/>
    <property type="molecule type" value="Genomic_DNA"/>
</dbReference>
<dbReference type="RefSeq" id="WP_004024476.1">
    <property type="nucleotide sequence ID" value="NC_009497.1"/>
</dbReference>
<dbReference type="SMR" id="A5IYA9"/>
<dbReference type="STRING" id="347257.MAG3200"/>
<dbReference type="GeneID" id="93358083"/>
<dbReference type="KEGG" id="maa:MAG3200"/>
<dbReference type="HOGENOM" id="CLU_007265_0_0_14"/>
<dbReference type="Proteomes" id="UP000007065">
    <property type="component" value="Chromosome"/>
</dbReference>
<dbReference type="GO" id="GO:0005829">
    <property type="term" value="C:cytosol"/>
    <property type="evidence" value="ECO:0007669"/>
    <property type="project" value="TreeGrafter"/>
</dbReference>
<dbReference type="GO" id="GO:0005525">
    <property type="term" value="F:GTP binding"/>
    <property type="evidence" value="ECO:0007669"/>
    <property type="project" value="UniProtKB-UniRule"/>
</dbReference>
<dbReference type="GO" id="GO:0003924">
    <property type="term" value="F:GTPase activity"/>
    <property type="evidence" value="ECO:0007669"/>
    <property type="project" value="InterPro"/>
</dbReference>
<dbReference type="GO" id="GO:0003746">
    <property type="term" value="F:translation elongation factor activity"/>
    <property type="evidence" value="ECO:0007669"/>
    <property type="project" value="UniProtKB-UniRule"/>
</dbReference>
<dbReference type="CDD" id="cd01884">
    <property type="entry name" value="EF_Tu"/>
    <property type="match status" value="1"/>
</dbReference>
<dbReference type="CDD" id="cd03697">
    <property type="entry name" value="EFTU_II"/>
    <property type="match status" value="1"/>
</dbReference>
<dbReference type="CDD" id="cd03707">
    <property type="entry name" value="EFTU_III"/>
    <property type="match status" value="1"/>
</dbReference>
<dbReference type="FunFam" id="2.40.30.10:FF:000001">
    <property type="entry name" value="Elongation factor Tu"/>
    <property type="match status" value="1"/>
</dbReference>
<dbReference type="FunFam" id="3.40.50.300:FF:000003">
    <property type="entry name" value="Elongation factor Tu"/>
    <property type="match status" value="1"/>
</dbReference>
<dbReference type="Gene3D" id="3.40.50.300">
    <property type="entry name" value="P-loop containing nucleotide triphosphate hydrolases"/>
    <property type="match status" value="1"/>
</dbReference>
<dbReference type="Gene3D" id="2.40.30.10">
    <property type="entry name" value="Translation factors"/>
    <property type="match status" value="2"/>
</dbReference>
<dbReference type="HAMAP" id="MF_00118_B">
    <property type="entry name" value="EF_Tu_B"/>
    <property type="match status" value="1"/>
</dbReference>
<dbReference type="InterPro" id="IPR041709">
    <property type="entry name" value="EF-Tu_GTP-bd"/>
</dbReference>
<dbReference type="InterPro" id="IPR050055">
    <property type="entry name" value="EF-Tu_GTPase"/>
</dbReference>
<dbReference type="InterPro" id="IPR004161">
    <property type="entry name" value="EFTu-like_2"/>
</dbReference>
<dbReference type="InterPro" id="IPR033720">
    <property type="entry name" value="EFTU_2"/>
</dbReference>
<dbReference type="InterPro" id="IPR031157">
    <property type="entry name" value="G_TR_CS"/>
</dbReference>
<dbReference type="InterPro" id="IPR027417">
    <property type="entry name" value="P-loop_NTPase"/>
</dbReference>
<dbReference type="InterPro" id="IPR005225">
    <property type="entry name" value="Small_GTP-bd"/>
</dbReference>
<dbReference type="InterPro" id="IPR000795">
    <property type="entry name" value="T_Tr_GTP-bd_dom"/>
</dbReference>
<dbReference type="InterPro" id="IPR009000">
    <property type="entry name" value="Transl_B-barrel_sf"/>
</dbReference>
<dbReference type="InterPro" id="IPR009001">
    <property type="entry name" value="Transl_elong_EF1A/Init_IF2_C"/>
</dbReference>
<dbReference type="InterPro" id="IPR004541">
    <property type="entry name" value="Transl_elong_EFTu/EF1A_bac/org"/>
</dbReference>
<dbReference type="InterPro" id="IPR004160">
    <property type="entry name" value="Transl_elong_EFTu/EF1A_C"/>
</dbReference>
<dbReference type="NCBIfam" id="TIGR00485">
    <property type="entry name" value="EF-Tu"/>
    <property type="match status" value="1"/>
</dbReference>
<dbReference type="NCBIfam" id="NF000766">
    <property type="entry name" value="PRK00049.1"/>
    <property type="match status" value="1"/>
</dbReference>
<dbReference type="NCBIfam" id="NF009372">
    <property type="entry name" value="PRK12735.1"/>
    <property type="match status" value="1"/>
</dbReference>
<dbReference type="NCBIfam" id="NF009373">
    <property type="entry name" value="PRK12736.1"/>
    <property type="match status" value="1"/>
</dbReference>
<dbReference type="NCBIfam" id="TIGR00231">
    <property type="entry name" value="small_GTP"/>
    <property type="match status" value="1"/>
</dbReference>
<dbReference type="PANTHER" id="PTHR43721:SF22">
    <property type="entry name" value="ELONGATION FACTOR TU, MITOCHONDRIAL"/>
    <property type="match status" value="1"/>
</dbReference>
<dbReference type="PANTHER" id="PTHR43721">
    <property type="entry name" value="ELONGATION FACTOR TU-RELATED"/>
    <property type="match status" value="1"/>
</dbReference>
<dbReference type="Pfam" id="PF00009">
    <property type="entry name" value="GTP_EFTU"/>
    <property type="match status" value="1"/>
</dbReference>
<dbReference type="Pfam" id="PF03144">
    <property type="entry name" value="GTP_EFTU_D2"/>
    <property type="match status" value="1"/>
</dbReference>
<dbReference type="Pfam" id="PF03143">
    <property type="entry name" value="GTP_EFTU_D3"/>
    <property type="match status" value="1"/>
</dbReference>
<dbReference type="PRINTS" id="PR00315">
    <property type="entry name" value="ELONGATNFCT"/>
</dbReference>
<dbReference type="SUPFAM" id="SSF50465">
    <property type="entry name" value="EF-Tu/eEF-1alpha/eIF2-gamma C-terminal domain"/>
    <property type="match status" value="1"/>
</dbReference>
<dbReference type="SUPFAM" id="SSF52540">
    <property type="entry name" value="P-loop containing nucleoside triphosphate hydrolases"/>
    <property type="match status" value="1"/>
</dbReference>
<dbReference type="SUPFAM" id="SSF50447">
    <property type="entry name" value="Translation proteins"/>
    <property type="match status" value="1"/>
</dbReference>
<dbReference type="PROSITE" id="PS00301">
    <property type="entry name" value="G_TR_1"/>
    <property type="match status" value="1"/>
</dbReference>
<dbReference type="PROSITE" id="PS51722">
    <property type="entry name" value="G_TR_2"/>
    <property type="match status" value="1"/>
</dbReference>